<evidence type="ECO:0000255" key="1">
    <source>
        <dbReference type="HAMAP-Rule" id="MF_00527"/>
    </source>
</evidence>
<gene>
    <name type="ordered locus">Ldb0170</name>
</gene>
<protein>
    <recommendedName>
        <fullName evidence="1">Putative 3-methyladenine DNA glycosylase</fullName>
        <ecNumber evidence="1">3.2.2.-</ecNumber>
    </recommendedName>
</protein>
<keyword id="KW-0227">DNA damage</keyword>
<keyword id="KW-0234">DNA repair</keyword>
<keyword id="KW-0378">Hydrolase</keyword>
<keyword id="KW-1185">Reference proteome</keyword>
<dbReference type="EC" id="3.2.2.-" evidence="1"/>
<dbReference type="EMBL" id="CR954253">
    <property type="protein sequence ID" value="CAI97010.1"/>
    <property type="molecule type" value="Genomic_DNA"/>
</dbReference>
<dbReference type="RefSeq" id="WP_003624121.1">
    <property type="nucleotide sequence ID" value="NZ_JQAV01000003.1"/>
</dbReference>
<dbReference type="SMR" id="Q1G7S0"/>
<dbReference type="STRING" id="390333.Ldb0170"/>
<dbReference type="KEGG" id="ldb:Ldb0170"/>
<dbReference type="PATRIC" id="fig|390333.13.peg.1305"/>
<dbReference type="eggNOG" id="COG2094">
    <property type="taxonomic scope" value="Bacteria"/>
</dbReference>
<dbReference type="HOGENOM" id="CLU_060471_2_0_9"/>
<dbReference type="BioCyc" id="LDEL390333:LDB_RS00695-MONOMER"/>
<dbReference type="Proteomes" id="UP000001259">
    <property type="component" value="Chromosome"/>
</dbReference>
<dbReference type="GO" id="GO:0003905">
    <property type="term" value="F:alkylbase DNA N-glycosylase activity"/>
    <property type="evidence" value="ECO:0007669"/>
    <property type="project" value="InterPro"/>
</dbReference>
<dbReference type="GO" id="GO:0003677">
    <property type="term" value="F:DNA binding"/>
    <property type="evidence" value="ECO:0007669"/>
    <property type="project" value="InterPro"/>
</dbReference>
<dbReference type="GO" id="GO:0006284">
    <property type="term" value="P:base-excision repair"/>
    <property type="evidence" value="ECO:0007669"/>
    <property type="project" value="InterPro"/>
</dbReference>
<dbReference type="CDD" id="cd00540">
    <property type="entry name" value="AAG"/>
    <property type="match status" value="1"/>
</dbReference>
<dbReference type="Gene3D" id="3.10.300.10">
    <property type="entry name" value="Methylpurine-DNA glycosylase (MPG)"/>
    <property type="match status" value="1"/>
</dbReference>
<dbReference type="HAMAP" id="MF_00527">
    <property type="entry name" value="3MGH"/>
    <property type="match status" value="1"/>
</dbReference>
<dbReference type="InterPro" id="IPR011034">
    <property type="entry name" value="Formyl_transferase-like_C_sf"/>
</dbReference>
<dbReference type="InterPro" id="IPR003180">
    <property type="entry name" value="MPG"/>
</dbReference>
<dbReference type="InterPro" id="IPR036995">
    <property type="entry name" value="MPG_sf"/>
</dbReference>
<dbReference type="NCBIfam" id="TIGR00567">
    <property type="entry name" value="3mg"/>
    <property type="match status" value="1"/>
</dbReference>
<dbReference type="PANTHER" id="PTHR10429">
    <property type="entry name" value="DNA-3-METHYLADENINE GLYCOSYLASE"/>
    <property type="match status" value="1"/>
</dbReference>
<dbReference type="PANTHER" id="PTHR10429:SF0">
    <property type="entry name" value="DNA-3-METHYLADENINE GLYCOSYLASE"/>
    <property type="match status" value="1"/>
</dbReference>
<dbReference type="Pfam" id="PF02245">
    <property type="entry name" value="Pur_DNA_glyco"/>
    <property type="match status" value="1"/>
</dbReference>
<dbReference type="SUPFAM" id="SSF50486">
    <property type="entry name" value="FMT C-terminal domain-like"/>
    <property type="match status" value="1"/>
</dbReference>
<comment type="similarity">
    <text evidence="1">Belongs to the DNA glycosylase MPG family.</text>
</comment>
<name>3MGH_LACDA</name>
<accession>Q1G7S0</accession>
<proteinExistence type="inferred from homology"/>
<feature type="chain" id="PRO_0000265027" description="Putative 3-methyladenine DNA glycosylase">
    <location>
        <begin position="1"/>
        <end position="208"/>
    </location>
</feature>
<organism>
    <name type="scientific">Lactobacillus delbrueckii subsp. bulgaricus (strain ATCC 11842 / DSM 20081 / BCRC 10696 / JCM 1002 / NBRC 13953 / NCIMB 11778 / NCTC 12712 / WDCM 00102 / Lb 14)</name>
    <dbReference type="NCBI Taxonomy" id="390333"/>
    <lineage>
        <taxon>Bacteria</taxon>
        <taxon>Bacillati</taxon>
        <taxon>Bacillota</taxon>
        <taxon>Bacilli</taxon>
        <taxon>Lactobacillales</taxon>
        <taxon>Lactobacillaceae</taxon>
        <taxon>Lactobacillus</taxon>
    </lineage>
</organism>
<reference key="1">
    <citation type="journal article" date="2006" name="Proc. Natl. Acad. Sci. U.S.A.">
        <title>The complete genome sequence of Lactobacillus bulgaricus reveals extensive and ongoing reductive evolution.</title>
        <authorList>
            <person name="van de Guchte M."/>
            <person name="Penaud S."/>
            <person name="Grimaldi C."/>
            <person name="Barbe V."/>
            <person name="Bryson K."/>
            <person name="Nicolas P."/>
            <person name="Robert C."/>
            <person name="Oztas S."/>
            <person name="Mangenot S."/>
            <person name="Couloux A."/>
            <person name="Loux V."/>
            <person name="Dervyn R."/>
            <person name="Bossy R."/>
            <person name="Bolotin A."/>
            <person name="Batto J.-M."/>
            <person name="Walunas T."/>
            <person name="Gibrat J.-F."/>
            <person name="Bessieres P."/>
            <person name="Weissenbach J."/>
            <person name="Ehrlich S.D."/>
            <person name="Maguin E."/>
        </authorList>
    </citation>
    <scope>NUCLEOTIDE SEQUENCE [LARGE SCALE GENOMIC DNA]</scope>
    <source>
        <strain>ATCC 11842 / DSM 20081 / BCRC 10696 / JCM 1002 / NBRC 13953 / NCIMB 11778 / NCTC 12712 / WDCM 00102 / Lb 14</strain>
    </source>
</reference>
<sequence>MDYRNFFTGRPTSEICRDLIGRPFYYQAGGEKIGGYIVESEAYLGIYDRAAHSYGGRRSHANEGLWRAGGTIYIYSQRQYVFFDIACQEEGNPQGVLIRAIEPVWGLDQMLKNRGGKDGVLLTNGPAKLMQAMGIKSRNWDLAPLADSPFVIDLTEKKPAKEIVASPRIGIVQADPAWAQAPLRYYVAGNPYVSGMKKRDWADDHGWL</sequence>